<proteinExistence type="inferred from homology"/>
<feature type="chain" id="PRO_1000005231" description="Small ribosomal subunit protein bS6">
    <location>
        <begin position="1"/>
        <end position="124"/>
    </location>
</feature>
<feature type="region of interest" description="Disordered" evidence="2">
    <location>
        <begin position="96"/>
        <end position="124"/>
    </location>
</feature>
<feature type="compositionally biased region" description="Low complexity" evidence="2">
    <location>
        <begin position="114"/>
        <end position="124"/>
    </location>
</feature>
<accession>A1V4R1</accession>
<keyword id="KW-0687">Ribonucleoprotein</keyword>
<keyword id="KW-0689">Ribosomal protein</keyword>
<keyword id="KW-0694">RNA-binding</keyword>
<keyword id="KW-0699">rRNA-binding</keyword>
<name>RS6_BURMS</name>
<gene>
    <name evidence="1" type="primary">rpsF</name>
    <name type="ordered locus">BMASAVP1_A1895</name>
</gene>
<protein>
    <recommendedName>
        <fullName evidence="1">Small ribosomal subunit protein bS6</fullName>
    </recommendedName>
    <alternativeName>
        <fullName evidence="3">30S ribosomal protein S6</fullName>
    </alternativeName>
</protein>
<comment type="function">
    <text evidence="1">Binds together with bS18 to 16S ribosomal RNA.</text>
</comment>
<comment type="similarity">
    <text evidence="1">Belongs to the bacterial ribosomal protein bS6 family.</text>
</comment>
<dbReference type="EMBL" id="CP000526">
    <property type="protein sequence ID" value="ABM51473.1"/>
    <property type="molecule type" value="Genomic_DNA"/>
</dbReference>
<dbReference type="RefSeq" id="WP_004193673.1">
    <property type="nucleotide sequence ID" value="NC_008785.1"/>
</dbReference>
<dbReference type="SMR" id="A1V4R1"/>
<dbReference type="GeneID" id="93060533"/>
<dbReference type="KEGG" id="bmv:BMASAVP1_A1895"/>
<dbReference type="HOGENOM" id="CLU_113441_6_1_4"/>
<dbReference type="GO" id="GO:0022627">
    <property type="term" value="C:cytosolic small ribosomal subunit"/>
    <property type="evidence" value="ECO:0007669"/>
    <property type="project" value="TreeGrafter"/>
</dbReference>
<dbReference type="GO" id="GO:0070181">
    <property type="term" value="F:small ribosomal subunit rRNA binding"/>
    <property type="evidence" value="ECO:0007669"/>
    <property type="project" value="TreeGrafter"/>
</dbReference>
<dbReference type="GO" id="GO:0003735">
    <property type="term" value="F:structural constituent of ribosome"/>
    <property type="evidence" value="ECO:0007669"/>
    <property type="project" value="InterPro"/>
</dbReference>
<dbReference type="GO" id="GO:0006412">
    <property type="term" value="P:translation"/>
    <property type="evidence" value="ECO:0007669"/>
    <property type="project" value="UniProtKB-UniRule"/>
</dbReference>
<dbReference type="CDD" id="cd00473">
    <property type="entry name" value="bS6"/>
    <property type="match status" value="1"/>
</dbReference>
<dbReference type="Gene3D" id="3.30.70.60">
    <property type="match status" value="1"/>
</dbReference>
<dbReference type="HAMAP" id="MF_00360">
    <property type="entry name" value="Ribosomal_bS6"/>
    <property type="match status" value="1"/>
</dbReference>
<dbReference type="InterPro" id="IPR000529">
    <property type="entry name" value="Ribosomal_bS6"/>
</dbReference>
<dbReference type="InterPro" id="IPR035980">
    <property type="entry name" value="Ribosomal_bS6_sf"/>
</dbReference>
<dbReference type="InterPro" id="IPR020814">
    <property type="entry name" value="Ribosomal_S6_plastid/chlpt"/>
</dbReference>
<dbReference type="InterPro" id="IPR014717">
    <property type="entry name" value="Transl_elong_EF1B/ribsomal_bS6"/>
</dbReference>
<dbReference type="NCBIfam" id="TIGR00166">
    <property type="entry name" value="S6"/>
    <property type="match status" value="1"/>
</dbReference>
<dbReference type="PANTHER" id="PTHR21011">
    <property type="entry name" value="MITOCHONDRIAL 28S RIBOSOMAL PROTEIN S6"/>
    <property type="match status" value="1"/>
</dbReference>
<dbReference type="PANTHER" id="PTHR21011:SF1">
    <property type="entry name" value="SMALL RIBOSOMAL SUBUNIT PROTEIN BS6M"/>
    <property type="match status" value="1"/>
</dbReference>
<dbReference type="Pfam" id="PF01250">
    <property type="entry name" value="Ribosomal_S6"/>
    <property type="match status" value="1"/>
</dbReference>
<dbReference type="SUPFAM" id="SSF54995">
    <property type="entry name" value="Ribosomal protein S6"/>
    <property type="match status" value="1"/>
</dbReference>
<sequence length="124" mass="14306">MRHYEIVFIVHPDQSEQVPAMIERYKSTITSHGGQIHRVEDWGRRQLAYMIEKLAKAHYVCMNIECDQTTLDELEHAFKFNDAVLRHLIVKMKKAETGPSPMMKEVQREEAKKAAAAQPTEAQA</sequence>
<reference key="1">
    <citation type="journal article" date="2010" name="Genome Biol. Evol.">
        <title>Continuing evolution of Burkholderia mallei through genome reduction and large-scale rearrangements.</title>
        <authorList>
            <person name="Losada L."/>
            <person name="Ronning C.M."/>
            <person name="DeShazer D."/>
            <person name="Woods D."/>
            <person name="Fedorova N."/>
            <person name="Kim H.S."/>
            <person name="Shabalina S.A."/>
            <person name="Pearson T.R."/>
            <person name="Brinkac L."/>
            <person name="Tan P."/>
            <person name="Nandi T."/>
            <person name="Crabtree J."/>
            <person name="Badger J."/>
            <person name="Beckstrom-Sternberg S."/>
            <person name="Saqib M."/>
            <person name="Schutzer S.E."/>
            <person name="Keim P."/>
            <person name="Nierman W.C."/>
        </authorList>
    </citation>
    <scope>NUCLEOTIDE SEQUENCE [LARGE SCALE GENOMIC DNA]</scope>
    <source>
        <strain>SAVP1</strain>
    </source>
</reference>
<organism>
    <name type="scientific">Burkholderia mallei (strain SAVP1)</name>
    <dbReference type="NCBI Taxonomy" id="320388"/>
    <lineage>
        <taxon>Bacteria</taxon>
        <taxon>Pseudomonadati</taxon>
        <taxon>Pseudomonadota</taxon>
        <taxon>Betaproteobacteria</taxon>
        <taxon>Burkholderiales</taxon>
        <taxon>Burkholderiaceae</taxon>
        <taxon>Burkholderia</taxon>
        <taxon>pseudomallei group</taxon>
    </lineage>
</organism>
<evidence type="ECO:0000255" key="1">
    <source>
        <dbReference type="HAMAP-Rule" id="MF_00360"/>
    </source>
</evidence>
<evidence type="ECO:0000256" key="2">
    <source>
        <dbReference type="SAM" id="MobiDB-lite"/>
    </source>
</evidence>
<evidence type="ECO:0000305" key="3"/>